<accession>B0U1W3</accession>
<name>TPIS_XYLFM</name>
<gene>
    <name evidence="1" type="primary">tpiA</name>
    <name type="ordered locus">Xfasm12_0267</name>
</gene>
<protein>
    <recommendedName>
        <fullName evidence="1">Triosephosphate isomerase</fullName>
        <shortName evidence="1">TIM</shortName>
        <shortName evidence="1">TPI</shortName>
        <ecNumber evidence="1">5.3.1.1</ecNumber>
    </recommendedName>
    <alternativeName>
        <fullName evidence="1">Triose-phosphate isomerase</fullName>
    </alternativeName>
</protein>
<organism>
    <name type="scientific">Xylella fastidiosa (strain M12)</name>
    <dbReference type="NCBI Taxonomy" id="405440"/>
    <lineage>
        <taxon>Bacteria</taxon>
        <taxon>Pseudomonadati</taxon>
        <taxon>Pseudomonadota</taxon>
        <taxon>Gammaproteobacteria</taxon>
        <taxon>Lysobacterales</taxon>
        <taxon>Lysobacteraceae</taxon>
        <taxon>Xylella</taxon>
    </lineage>
</organism>
<dbReference type="EC" id="5.3.1.1" evidence="1"/>
<dbReference type="EMBL" id="CP000941">
    <property type="protein sequence ID" value="ACA11290.1"/>
    <property type="molecule type" value="Genomic_DNA"/>
</dbReference>
<dbReference type="RefSeq" id="WP_004085305.1">
    <property type="nucleotide sequence ID" value="NC_010513.1"/>
</dbReference>
<dbReference type="SMR" id="B0U1W3"/>
<dbReference type="KEGG" id="xfm:Xfasm12_0267"/>
<dbReference type="HOGENOM" id="CLU_024251_2_3_6"/>
<dbReference type="UniPathway" id="UPA00109">
    <property type="reaction ID" value="UER00189"/>
</dbReference>
<dbReference type="UniPathway" id="UPA00138"/>
<dbReference type="GO" id="GO:0005829">
    <property type="term" value="C:cytosol"/>
    <property type="evidence" value="ECO:0007669"/>
    <property type="project" value="TreeGrafter"/>
</dbReference>
<dbReference type="GO" id="GO:0004807">
    <property type="term" value="F:triose-phosphate isomerase activity"/>
    <property type="evidence" value="ECO:0007669"/>
    <property type="project" value="UniProtKB-UniRule"/>
</dbReference>
<dbReference type="GO" id="GO:0006094">
    <property type="term" value="P:gluconeogenesis"/>
    <property type="evidence" value="ECO:0007669"/>
    <property type="project" value="UniProtKB-UniRule"/>
</dbReference>
<dbReference type="GO" id="GO:0046166">
    <property type="term" value="P:glyceraldehyde-3-phosphate biosynthetic process"/>
    <property type="evidence" value="ECO:0007669"/>
    <property type="project" value="TreeGrafter"/>
</dbReference>
<dbReference type="GO" id="GO:0019563">
    <property type="term" value="P:glycerol catabolic process"/>
    <property type="evidence" value="ECO:0007669"/>
    <property type="project" value="TreeGrafter"/>
</dbReference>
<dbReference type="GO" id="GO:0006096">
    <property type="term" value="P:glycolytic process"/>
    <property type="evidence" value="ECO:0007669"/>
    <property type="project" value="UniProtKB-UniRule"/>
</dbReference>
<dbReference type="CDD" id="cd00311">
    <property type="entry name" value="TIM"/>
    <property type="match status" value="1"/>
</dbReference>
<dbReference type="FunFam" id="3.20.20.70:FF:000016">
    <property type="entry name" value="Triosephosphate isomerase"/>
    <property type="match status" value="1"/>
</dbReference>
<dbReference type="Gene3D" id="3.20.20.70">
    <property type="entry name" value="Aldolase class I"/>
    <property type="match status" value="1"/>
</dbReference>
<dbReference type="HAMAP" id="MF_00147_B">
    <property type="entry name" value="TIM_B"/>
    <property type="match status" value="1"/>
</dbReference>
<dbReference type="InterPro" id="IPR013785">
    <property type="entry name" value="Aldolase_TIM"/>
</dbReference>
<dbReference type="InterPro" id="IPR035990">
    <property type="entry name" value="TIM_sf"/>
</dbReference>
<dbReference type="InterPro" id="IPR022896">
    <property type="entry name" value="TrioseP_Isoase_bac/euk"/>
</dbReference>
<dbReference type="InterPro" id="IPR000652">
    <property type="entry name" value="Triosephosphate_isomerase"/>
</dbReference>
<dbReference type="InterPro" id="IPR020861">
    <property type="entry name" value="Triosephosphate_isomerase_AS"/>
</dbReference>
<dbReference type="NCBIfam" id="TIGR00419">
    <property type="entry name" value="tim"/>
    <property type="match status" value="1"/>
</dbReference>
<dbReference type="PANTHER" id="PTHR21139">
    <property type="entry name" value="TRIOSEPHOSPHATE ISOMERASE"/>
    <property type="match status" value="1"/>
</dbReference>
<dbReference type="PANTHER" id="PTHR21139:SF42">
    <property type="entry name" value="TRIOSEPHOSPHATE ISOMERASE"/>
    <property type="match status" value="1"/>
</dbReference>
<dbReference type="Pfam" id="PF00121">
    <property type="entry name" value="TIM"/>
    <property type="match status" value="1"/>
</dbReference>
<dbReference type="SUPFAM" id="SSF51351">
    <property type="entry name" value="Triosephosphate isomerase (TIM)"/>
    <property type="match status" value="1"/>
</dbReference>
<dbReference type="PROSITE" id="PS00171">
    <property type="entry name" value="TIM_1"/>
    <property type="match status" value="1"/>
</dbReference>
<dbReference type="PROSITE" id="PS51440">
    <property type="entry name" value="TIM_2"/>
    <property type="match status" value="1"/>
</dbReference>
<evidence type="ECO:0000255" key="1">
    <source>
        <dbReference type="HAMAP-Rule" id="MF_00147"/>
    </source>
</evidence>
<proteinExistence type="inferred from homology"/>
<comment type="function">
    <text evidence="1">Involved in the gluconeogenesis. Catalyzes stereospecifically the conversion of dihydroxyacetone phosphate (DHAP) to D-glyceraldehyde-3-phosphate (G3P).</text>
</comment>
<comment type="catalytic activity">
    <reaction evidence="1">
        <text>D-glyceraldehyde 3-phosphate = dihydroxyacetone phosphate</text>
        <dbReference type="Rhea" id="RHEA:18585"/>
        <dbReference type="ChEBI" id="CHEBI:57642"/>
        <dbReference type="ChEBI" id="CHEBI:59776"/>
        <dbReference type="EC" id="5.3.1.1"/>
    </reaction>
</comment>
<comment type="pathway">
    <text evidence="1">Carbohydrate biosynthesis; gluconeogenesis.</text>
</comment>
<comment type="pathway">
    <text evidence="1">Carbohydrate degradation; glycolysis; D-glyceraldehyde 3-phosphate from glycerone phosphate: step 1/1.</text>
</comment>
<comment type="subunit">
    <text evidence="1">Homodimer.</text>
</comment>
<comment type="subcellular location">
    <subcellularLocation>
        <location evidence="1">Cytoplasm</location>
    </subcellularLocation>
</comment>
<comment type="similarity">
    <text evidence="1">Belongs to the triosephosphate isomerase family.</text>
</comment>
<reference key="1">
    <citation type="journal article" date="2010" name="J. Bacteriol.">
        <title>Whole genome sequences of two Xylella fastidiosa strains (M12 and M23) causing almond leaf scorch disease in California.</title>
        <authorList>
            <person name="Chen J."/>
            <person name="Xie G."/>
            <person name="Han S."/>
            <person name="Chertkov O."/>
            <person name="Sims D."/>
            <person name="Civerolo E.L."/>
        </authorList>
    </citation>
    <scope>NUCLEOTIDE SEQUENCE [LARGE SCALE GENOMIC DNA]</scope>
    <source>
        <strain>M12</strain>
    </source>
</reference>
<keyword id="KW-0963">Cytoplasm</keyword>
<keyword id="KW-0312">Gluconeogenesis</keyword>
<keyword id="KW-0324">Glycolysis</keyword>
<keyword id="KW-0413">Isomerase</keyword>
<feature type="chain" id="PRO_1000096552" description="Triosephosphate isomerase">
    <location>
        <begin position="1"/>
        <end position="249"/>
    </location>
</feature>
<feature type="active site" description="Electrophile" evidence="1">
    <location>
        <position position="94"/>
    </location>
</feature>
<feature type="active site" description="Proton acceptor" evidence="1">
    <location>
        <position position="166"/>
    </location>
</feature>
<feature type="binding site" evidence="1">
    <location>
        <begin position="9"/>
        <end position="11"/>
    </location>
    <ligand>
        <name>substrate</name>
    </ligand>
</feature>
<feature type="binding site" evidence="1">
    <location>
        <position position="172"/>
    </location>
    <ligand>
        <name>substrate</name>
    </ligand>
</feature>
<feature type="binding site" evidence="1">
    <location>
        <begin position="232"/>
        <end position="233"/>
    </location>
    <ligand>
        <name>substrate</name>
    </ligand>
</feature>
<sequence>MRPKIVVGNWKLHGSHAFAQALVAQVAAGLPLPGVSVIILPPLLYLSDLTQRFKGEGLAFGAQNVSHHDKGAYTGEVSAAMVADVGAHYTLVGHSERREYHHEDSELVARKFAAALSAGLRPILCVGESLPQREAGQAEVAIAMQLAPVLALVGPQGVARGLIAYEPVWAIGTGRHADPSQVQAMHAFIRGEIARQDARIGDSLLILYGGGIKPCNAAELFSQQDVDGGLIGGASLVADDFLAIARATV</sequence>